<comment type="function">
    <text evidence="1">Catalyzes the reduction of the glycolytic intermediate dihydroxyacetone phosphate (DHAP) to sn-glycerol 3-phosphate (G3P), the key precursor for phospholipid synthesis.</text>
</comment>
<comment type="catalytic activity">
    <reaction evidence="1">
        <text>sn-glycerol 3-phosphate + NAD(+) = dihydroxyacetone phosphate + NADH + H(+)</text>
        <dbReference type="Rhea" id="RHEA:11092"/>
        <dbReference type="ChEBI" id="CHEBI:15378"/>
        <dbReference type="ChEBI" id="CHEBI:57540"/>
        <dbReference type="ChEBI" id="CHEBI:57597"/>
        <dbReference type="ChEBI" id="CHEBI:57642"/>
        <dbReference type="ChEBI" id="CHEBI:57945"/>
        <dbReference type="EC" id="1.1.1.94"/>
    </reaction>
    <physiologicalReaction direction="right-to-left" evidence="1">
        <dbReference type="Rhea" id="RHEA:11094"/>
    </physiologicalReaction>
</comment>
<comment type="catalytic activity">
    <reaction evidence="1">
        <text>sn-glycerol 3-phosphate + NADP(+) = dihydroxyacetone phosphate + NADPH + H(+)</text>
        <dbReference type="Rhea" id="RHEA:11096"/>
        <dbReference type="ChEBI" id="CHEBI:15378"/>
        <dbReference type="ChEBI" id="CHEBI:57597"/>
        <dbReference type="ChEBI" id="CHEBI:57642"/>
        <dbReference type="ChEBI" id="CHEBI:57783"/>
        <dbReference type="ChEBI" id="CHEBI:58349"/>
        <dbReference type="EC" id="1.1.1.94"/>
    </reaction>
    <physiologicalReaction direction="right-to-left" evidence="1">
        <dbReference type="Rhea" id="RHEA:11098"/>
    </physiologicalReaction>
</comment>
<comment type="pathway">
    <text evidence="1">Membrane lipid metabolism; glycerophospholipid metabolism.</text>
</comment>
<comment type="subcellular location">
    <subcellularLocation>
        <location evidence="1">Cytoplasm</location>
    </subcellularLocation>
</comment>
<comment type="similarity">
    <text evidence="1">Belongs to the NAD-dependent glycerol-3-phosphate dehydrogenase family.</text>
</comment>
<protein>
    <recommendedName>
        <fullName evidence="1">Glycerol-3-phosphate dehydrogenase [NAD(P)+]</fullName>
        <ecNumber evidence="1">1.1.1.94</ecNumber>
    </recommendedName>
    <alternativeName>
        <fullName evidence="1">NAD(P)(+)-dependent glycerol-3-phosphate dehydrogenase</fullName>
    </alternativeName>
    <alternativeName>
        <fullName evidence="1">NAD(P)H-dependent dihydroxyacetone-phosphate reductase</fullName>
    </alternativeName>
</protein>
<organism>
    <name type="scientific">Rickettsia rickettsii (strain Sheila Smith)</name>
    <dbReference type="NCBI Taxonomy" id="392021"/>
    <lineage>
        <taxon>Bacteria</taxon>
        <taxon>Pseudomonadati</taxon>
        <taxon>Pseudomonadota</taxon>
        <taxon>Alphaproteobacteria</taxon>
        <taxon>Rickettsiales</taxon>
        <taxon>Rickettsiaceae</taxon>
        <taxon>Rickettsieae</taxon>
        <taxon>Rickettsia</taxon>
        <taxon>spotted fever group</taxon>
    </lineage>
</organism>
<gene>
    <name evidence="1" type="primary">gpsA</name>
    <name type="ordered locus">A1G_03470</name>
</gene>
<reference key="1">
    <citation type="submission" date="2007-09" db="EMBL/GenBank/DDBJ databases">
        <title>Complete genome sequence of Rickettsia rickettsii.</title>
        <authorList>
            <person name="Madan A."/>
            <person name="Fahey J."/>
            <person name="Helton E."/>
            <person name="Ketteman M."/>
            <person name="Madan A."/>
            <person name="Rodrigues S."/>
            <person name="Sanchez A."/>
            <person name="Dasch G."/>
            <person name="Eremeeva M."/>
        </authorList>
    </citation>
    <scope>NUCLEOTIDE SEQUENCE [LARGE SCALE GENOMIC DNA]</scope>
    <source>
        <strain>Sheila Smith</strain>
    </source>
</reference>
<name>GPDA_RICRS</name>
<dbReference type="EC" id="1.1.1.94" evidence="1"/>
<dbReference type="EMBL" id="CP000848">
    <property type="protein sequence ID" value="ABV76225.1"/>
    <property type="molecule type" value="Genomic_DNA"/>
</dbReference>
<dbReference type="RefSeq" id="WP_012150809.1">
    <property type="nucleotide sequence ID" value="NZ_CP121767.1"/>
</dbReference>
<dbReference type="SMR" id="A8GS50"/>
<dbReference type="GeneID" id="79937358"/>
<dbReference type="KEGG" id="rri:A1G_03470"/>
<dbReference type="HOGENOM" id="CLU_033449_0_0_5"/>
<dbReference type="UniPathway" id="UPA00940"/>
<dbReference type="Proteomes" id="UP000006832">
    <property type="component" value="Chromosome"/>
</dbReference>
<dbReference type="GO" id="GO:0005829">
    <property type="term" value="C:cytosol"/>
    <property type="evidence" value="ECO:0007669"/>
    <property type="project" value="TreeGrafter"/>
</dbReference>
<dbReference type="GO" id="GO:0047952">
    <property type="term" value="F:glycerol-3-phosphate dehydrogenase [NAD(P)+] activity"/>
    <property type="evidence" value="ECO:0007669"/>
    <property type="project" value="UniProtKB-UniRule"/>
</dbReference>
<dbReference type="GO" id="GO:0051287">
    <property type="term" value="F:NAD binding"/>
    <property type="evidence" value="ECO:0007669"/>
    <property type="project" value="InterPro"/>
</dbReference>
<dbReference type="GO" id="GO:0005975">
    <property type="term" value="P:carbohydrate metabolic process"/>
    <property type="evidence" value="ECO:0007669"/>
    <property type="project" value="InterPro"/>
</dbReference>
<dbReference type="GO" id="GO:0046167">
    <property type="term" value="P:glycerol-3-phosphate biosynthetic process"/>
    <property type="evidence" value="ECO:0007669"/>
    <property type="project" value="UniProtKB-UniRule"/>
</dbReference>
<dbReference type="GO" id="GO:0046168">
    <property type="term" value="P:glycerol-3-phosphate catabolic process"/>
    <property type="evidence" value="ECO:0007669"/>
    <property type="project" value="InterPro"/>
</dbReference>
<dbReference type="GO" id="GO:0006650">
    <property type="term" value="P:glycerophospholipid metabolic process"/>
    <property type="evidence" value="ECO:0007669"/>
    <property type="project" value="UniProtKB-UniRule"/>
</dbReference>
<dbReference type="GO" id="GO:0008654">
    <property type="term" value="P:phospholipid biosynthetic process"/>
    <property type="evidence" value="ECO:0007669"/>
    <property type="project" value="UniProtKB-KW"/>
</dbReference>
<dbReference type="Gene3D" id="1.10.1040.10">
    <property type="entry name" value="N-(1-d-carboxylethyl)-l-norvaline Dehydrogenase, domain 2"/>
    <property type="match status" value="1"/>
</dbReference>
<dbReference type="Gene3D" id="3.40.50.720">
    <property type="entry name" value="NAD(P)-binding Rossmann-like Domain"/>
    <property type="match status" value="1"/>
</dbReference>
<dbReference type="HAMAP" id="MF_00394">
    <property type="entry name" value="NAD_Glyc3P_dehydrog"/>
    <property type="match status" value="1"/>
</dbReference>
<dbReference type="InterPro" id="IPR008927">
    <property type="entry name" value="6-PGluconate_DH-like_C_sf"/>
</dbReference>
<dbReference type="InterPro" id="IPR013328">
    <property type="entry name" value="6PGD_dom2"/>
</dbReference>
<dbReference type="InterPro" id="IPR006168">
    <property type="entry name" value="G3P_DH_NAD-dep"/>
</dbReference>
<dbReference type="InterPro" id="IPR006109">
    <property type="entry name" value="G3P_DH_NAD-dep_C"/>
</dbReference>
<dbReference type="InterPro" id="IPR011128">
    <property type="entry name" value="G3P_DH_NAD-dep_N"/>
</dbReference>
<dbReference type="InterPro" id="IPR036291">
    <property type="entry name" value="NAD(P)-bd_dom_sf"/>
</dbReference>
<dbReference type="NCBIfam" id="NF000940">
    <property type="entry name" value="PRK00094.1-2"/>
    <property type="match status" value="1"/>
</dbReference>
<dbReference type="NCBIfam" id="NF000947">
    <property type="entry name" value="PRK00094.2-5"/>
    <property type="match status" value="1"/>
</dbReference>
<dbReference type="PANTHER" id="PTHR11728">
    <property type="entry name" value="GLYCEROL-3-PHOSPHATE DEHYDROGENASE"/>
    <property type="match status" value="1"/>
</dbReference>
<dbReference type="PANTHER" id="PTHR11728:SF1">
    <property type="entry name" value="GLYCEROL-3-PHOSPHATE DEHYDROGENASE [NAD(+)] 2, CHLOROPLASTIC"/>
    <property type="match status" value="1"/>
</dbReference>
<dbReference type="Pfam" id="PF07479">
    <property type="entry name" value="NAD_Gly3P_dh_C"/>
    <property type="match status" value="1"/>
</dbReference>
<dbReference type="Pfam" id="PF01210">
    <property type="entry name" value="NAD_Gly3P_dh_N"/>
    <property type="match status" value="1"/>
</dbReference>
<dbReference type="PIRSF" id="PIRSF000114">
    <property type="entry name" value="Glycerol-3-P_dh"/>
    <property type="match status" value="1"/>
</dbReference>
<dbReference type="PRINTS" id="PR00077">
    <property type="entry name" value="GPDHDRGNASE"/>
</dbReference>
<dbReference type="SUPFAM" id="SSF48179">
    <property type="entry name" value="6-phosphogluconate dehydrogenase C-terminal domain-like"/>
    <property type="match status" value="1"/>
</dbReference>
<dbReference type="SUPFAM" id="SSF51735">
    <property type="entry name" value="NAD(P)-binding Rossmann-fold domains"/>
    <property type="match status" value="1"/>
</dbReference>
<dbReference type="PROSITE" id="PS00957">
    <property type="entry name" value="NAD_G3PDH"/>
    <property type="match status" value="1"/>
</dbReference>
<proteinExistence type="inferred from homology"/>
<feature type="chain" id="PRO_1000049544" description="Glycerol-3-phosphate dehydrogenase [NAD(P)+]">
    <location>
        <begin position="1"/>
        <end position="338"/>
    </location>
</feature>
<feature type="active site" description="Proton acceptor" evidence="1">
    <location>
        <position position="192"/>
    </location>
</feature>
<feature type="binding site" evidence="1">
    <location>
        <position position="14"/>
    </location>
    <ligand>
        <name>NADPH</name>
        <dbReference type="ChEBI" id="CHEBI:57783"/>
    </ligand>
</feature>
<feature type="binding site" evidence="1">
    <location>
        <position position="15"/>
    </location>
    <ligand>
        <name>NADPH</name>
        <dbReference type="ChEBI" id="CHEBI:57783"/>
    </ligand>
</feature>
<feature type="binding site" evidence="1">
    <location>
        <position position="35"/>
    </location>
    <ligand>
        <name>NADPH</name>
        <dbReference type="ChEBI" id="CHEBI:57783"/>
    </ligand>
</feature>
<feature type="binding site" evidence="1">
    <location>
        <position position="109"/>
    </location>
    <ligand>
        <name>NADPH</name>
        <dbReference type="ChEBI" id="CHEBI:57783"/>
    </ligand>
</feature>
<feature type="binding site" evidence="1">
    <location>
        <position position="109"/>
    </location>
    <ligand>
        <name>sn-glycerol 3-phosphate</name>
        <dbReference type="ChEBI" id="CHEBI:57597"/>
    </ligand>
</feature>
<feature type="binding site" evidence="1">
    <location>
        <position position="137"/>
    </location>
    <ligand>
        <name>sn-glycerol 3-phosphate</name>
        <dbReference type="ChEBI" id="CHEBI:57597"/>
    </ligand>
</feature>
<feature type="binding site" evidence="1">
    <location>
        <position position="141"/>
    </location>
    <ligand>
        <name>NADPH</name>
        <dbReference type="ChEBI" id="CHEBI:57783"/>
    </ligand>
</feature>
<feature type="binding site" evidence="1">
    <location>
        <position position="192"/>
    </location>
    <ligand>
        <name>sn-glycerol 3-phosphate</name>
        <dbReference type="ChEBI" id="CHEBI:57597"/>
    </ligand>
</feature>
<feature type="binding site" evidence="1">
    <location>
        <position position="247"/>
    </location>
    <ligand>
        <name>sn-glycerol 3-phosphate</name>
        <dbReference type="ChEBI" id="CHEBI:57597"/>
    </ligand>
</feature>
<feature type="binding site" evidence="1">
    <location>
        <position position="257"/>
    </location>
    <ligand>
        <name>sn-glycerol 3-phosphate</name>
        <dbReference type="ChEBI" id="CHEBI:57597"/>
    </ligand>
</feature>
<feature type="binding site" evidence="1">
    <location>
        <position position="258"/>
    </location>
    <ligand>
        <name>NADPH</name>
        <dbReference type="ChEBI" id="CHEBI:57783"/>
    </ligand>
</feature>
<feature type="binding site" evidence="1">
    <location>
        <position position="258"/>
    </location>
    <ligand>
        <name>sn-glycerol 3-phosphate</name>
        <dbReference type="ChEBI" id="CHEBI:57597"/>
    </ligand>
</feature>
<feature type="binding site" evidence="1">
    <location>
        <position position="259"/>
    </location>
    <ligand>
        <name>sn-glycerol 3-phosphate</name>
        <dbReference type="ChEBI" id="CHEBI:57597"/>
    </ligand>
</feature>
<feature type="binding site" evidence="1">
    <location>
        <position position="282"/>
    </location>
    <ligand>
        <name>NADPH</name>
        <dbReference type="ChEBI" id="CHEBI:57783"/>
    </ligand>
</feature>
<feature type="binding site" evidence="1">
    <location>
        <position position="284"/>
    </location>
    <ligand>
        <name>NADPH</name>
        <dbReference type="ChEBI" id="CHEBI:57783"/>
    </ligand>
</feature>
<evidence type="ECO:0000255" key="1">
    <source>
        <dbReference type="HAMAP-Rule" id="MF_00394"/>
    </source>
</evidence>
<accession>A8GS50</accession>
<sequence>MNKFKNIAVYGGGSFGTSLASLAAQNCNNVTLFLRDEAIAKEILHNKTNVKYLGDIKLPAHLQATTNLDIIKDFELIIIAVPSYAFDDSIKLLKTHSISKDNTLLIATKGFARNPTTLFSDRLKTLLPHSPTAFFVGPNLAKELAKNLPASASIASLDIDIANKIAYNLSSKIFTTNVSSDIVTLQVAGALKNIFAIKSGIDLARKQGENARATLIVAALKEIAILSKALGGMQKNSDILLEGVVGDLVLTCYSLGSRNTKFGYELGISSDKKQFLQEYKELVEGREALKLVLDLIKKYNLHMPIISEVASCVIPYVIPAKAGMTYESTQQCLRRNDI</sequence>
<keyword id="KW-0963">Cytoplasm</keyword>
<keyword id="KW-0444">Lipid biosynthesis</keyword>
<keyword id="KW-0443">Lipid metabolism</keyword>
<keyword id="KW-0520">NAD</keyword>
<keyword id="KW-0521">NADP</keyword>
<keyword id="KW-0547">Nucleotide-binding</keyword>
<keyword id="KW-0560">Oxidoreductase</keyword>
<keyword id="KW-0594">Phospholipid biosynthesis</keyword>
<keyword id="KW-1208">Phospholipid metabolism</keyword>